<accession>Q8XIC9</accession>
<evidence type="ECO:0000255" key="1">
    <source>
        <dbReference type="HAMAP-Rule" id="MF_01396"/>
    </source>
</evidence>
<comment type="function">
    <text evidence="1">F(1)F(0) ATP synthase produces ATP from ADP in the presence of a proton or sodium gradient. F-type ATPases consist of two structural domains, F(1) containing the extramembraneous catalytic core and F(0) containing the membrane proton channel, linked together by a central stalk and a peripheral stalk. During catalysis, ATP synthesis in the catalytic domain of F(1) is coupled via a rotary mechanism of the central stalk subunits to proton translocation.</text>
</comment>
<comment type="function">
    <text evidence="1">Key component of the F(0) channel; it plays a direct role in translocation across the membrane. A homomeric c-ring of between 10-14 subunits forms the central stalk rotor element with the F(1) delta and epsilon subunits.</text>
</comment>
<comment type="subunit">
    <text evidence="1">F-type ATPases have 2 components, F(1) - the catalytic core - and F(0) - the membrane proton channel. F(1) has five subunits: alpha(3), beta(3), gamma(1), delta(1), epsilon(1). F(0) has three main subunits: a(1), b(2) and c(10-14). The alpha and beta chains form an alternating ring which encloses part of the gamma chain. F(1) is attached to F(0) by a central stalk formed by the gamma and epsilon chains, while a peripheral stalk is formed by the delta and b chains.</text>
</comment>
<comment type="subcellular location">
    <subcellularLocation>
        <location evidence="1">Cell membrane</location>
        <topology evidence="1">Multi-pass membrane protein</topology>
    </subcellularLocation>
</comment>
<comment type="similarity">
    <text evidence="1">Belongs to the ATPase C chain family.</text>
</comment>
<proteinExistence type="inferred from homology"/>
<reference key="1">
    <citation type="journal article" date="2002" name="Proc. Natl. Acad. Sci. U.S.A.">
        <title>Complete genome sequence of Clostridium perfringens, an anaerobic flesh-eater.</title>
        <authorList>
            <person name="Shimizu T."/>
            <person name="Ohtani K."/>
            <person name="Hirakawa H."/>
            <person name="Ohshima K."/>
            <person name="Yamashita A."/>
            <person name="Shiba T."/>
            <person name="Ogasawara N."/>
            <person name="Hattori M."/>
            <person name="Kuhara S."/>
            <person name="Hayashi H."/>
        </authorList>
    </citation>
    <scope>NUCLEOTIDE SEQUENCE [LARGE SCALE GENOMIC DNA]</scope>
    <source>
        <strain>13 / Type A</strain>
    </source>
</reference>
<keyword id="KW-0066">ATP synthesis</keyword>
<keyword id="KW-1003">Cell membrane</keyword>
<keyword id="KW-0138">CF(0)</keyword>
<keyword id="KW-0375">Hydrogen ion transport</keyword>
<keyword id="KW-0406">Ion transport</keyword>
<keyword id="KW-0446">Lipid-binding</keyword>
<keyword id="KW-0472">Membrane</keyword>
<keyword id="KW-1185">Reference proteome</keyword>
<keyword id="KW-0812">Transmembrane</keyword>
<keyword id="KW-1133">Transmembrane helix</keyword>
<keyword id="KW-0813">Transport</keyword>
<feature type="chain" id="PRO_0000365873" description="ATP synthase subunit c">
    <location>
        <begin position="1"/>
        <end position="72"/>
    </location>
</feature>
<feature type="transmembrane region" description="Helical" evidence="1">
    <location>
        <begin position="5"/>
        <end position="25"/>
    </location>
</feature>
<feature type="transmembrane region" description="Helical" evidence="1">
    <location>
        <begin position="51"/>
        <end position="71"/>
    </location>
</feature>
<feature type="site" description="Reversibly protonated during proton transport" evidence="1">
    <location>
        <position position="55"/>
    </location>
</feature>
<organism>
    <name type="scientific">Clostridium perfringens (strain 13 / Type A)</name>
    <dbReference type="NCBI Taxonomy" id="195102"/>
    <lineage>
        <taxon>Bacteria</taxon>
        <taxon>Bacillati</taxon>
        <taxon>Bacillota</taxon>
        <taxon>Clostridia</taxon>
        <taxon>Eubacteriales</taxon>
        <taxon>Clostridiaceae</taxon>
        <taxon>Clostridium</taxon>
    </lineage>
</organism>
<protein>
    <recommendedName>
        <fullName evidence="1">ATP synthase subunit c</fullName>
    </recommendedName>
    <alternativeName>
        <fullName evidence="1">ATP synthase F(0) sector subunit c</fullName>
    </alternativeName>
    <alternativeName>
        <fullName evidence="1">F-type ATPase subunit c</fullName>
        <shortName evidence="1">F-ATPase subunit c</shortName>
    </alternativeName>
    <alternativeName>
        <fullName evidence="1">Lipid-binding protein</fullName>
    </alternativeName>
</protein>
<gene>
    <name evidence="1" type="primary">atpE</name>
    <name type="ordered locus">CPE2192</name>
</gene>
<dbReference type="EMBL" id="BA000016">
    <property type="protein sequence ID" value="BAB81898.1"/>
    <property type="molecule type" value="Genomic_DNA"/>
</dbReference>
<dbReference type="RefSeq" id="WP_003452423.1">
    <property type="nucleotide sequence ID" value="NC_003366.1"/>
</dbReference>
<dbReference type="SMR" id="Q8XIC9"/>
<dbReference type="STRING" id="195102.gene:10491471"/>
<dbReference type="GeneID" id="93001265"/>
<dbReference type="KEGG" id="cpe:CPE2192"/>
<dbReference type="HOGENOM" id="CLU_148047_2_1_9"/>
<dbReference type="Proteomes" id="UP000000818">
    <property type="component" value="Chromosome"/>
</dbReference>
<dbReference type="GO" id="GO:0005886">
    <property type="term" value="C:plasma membrane"/>
    <property type="evidence" value="ECO:0007669"/>
    <property type="project" value="UniProtKB-SubCell"/>
</dbReference>
<dbReference type="GO" id="GO:0045259">
    <property type="term" value="C:proton-transporting ATP synthase complex"/>
    <property type="evidence" value="ECO:0007669"/>
    <property type="project" value="UniProtKB-KW"/>
</dbReference>
<dbReference type="GO" id="GO:0033177">
    <property type="term" value="C:proton-transporting two-sector ATPase complex, proton-transporting domain"/>
    <property type="evidence" value="ECO:0007669"/>
    <property type="project" value="InterPro"/>
</dbReference>
<dbReference type="GO" id="GO:0008289">
    <property type="term" value="F:lipid binding"/>
    <property type="evidence" value="ECO:0007669"/>
    <property type="project" value="UniProtKB-KW"/>
</dbReference>
<dbReference type="GO" id="GO:0046933">
    <property type="term" value="F:proton-transporting ATP synthase activity, rotational mechanism"/>
    <property type="evidence" value="ECO:0007669"/>
    <property type="project" value="UniProtKB-UniRule"/>
</dbReference>
<dbReference type="FunFam" id="1.20.20.10:FF:000002">
    <property type="entry name" value="ATP synthase subunit c"/>
    <property type="match status" value="1"/>
</dbReference>
<dbReference type="Gene3D" id="1.20.20.10">
    <property type="entry name" value="F1F0 ATP synthase subunit C"/>
    <property type="match status" value="1"/>
</dbReference>
<dbReference type="HAMAP" id="MF_01396">
    <property type="entry name" value="ATP_synth_c_bact"/>
    <property type="match status" value="1"/>
</dbReference>
<dbReference type="InterPro" id="IPR005953">
    <property type="entry name" value="ATP_synth_csu_bac/chlpt"/>
</dbReference>
<dbReference type="InterPro" id="IPR000454">
    <property type="entry name" value="ATP_synth_F0_csu"/>
</dbReference>
<dbReference type="InterPro" id="IPR020537">
    <property type="entry name" value="ATP_synth_F0_csu_DDCD_BS"/>
</dbReference>
<dbReference type="InterPro" id="IPR038662">
    <property type="entry name" value="ATP_synth_F0_csu_sf"/>
</dbReference>
<dbReference type="InterPro" id="IPR002379">
    <property type="entry name" value="ATPase_proteolipid_c-like_dom"/>
</dbReference>
<dbReference type="InterPro" id="IPR035921">
    <property type="entry name" value="F/V-ATP_Csub_sf"/>
</dbReference>
<dbReference type="NCBIfam" id="TIGR01260">
    <property type="entry name" value="ATP_synt_c"/>
    <property type="match status" value="1"/>
</dbReference>
<dbReference type="PANTHER" id="PTHR10031">
    <property type="entry name" value="ATP SYNTHASE LIPID-BINDING PROTEIN, MITOCHONDRIAL"/>
    <property type="match status" value="1"/>
</dbReference>
<dbReference type="PANTHER" id="PTHR10031:SF0">
    <property type="entry name" value="ATPASE PROTEIN 9"/>
    <property type="match status" value="1"/>
</dbReference>
<dbReference type="Pfam" id="PF00137">
    <property type="entry name" value="ATP-synt_C"/>
    <property type="match status" value="1"/>
</dbReference>
<dbReference type="PRINTS" id="PR00124">
    <property type="entry name" value="ATPASEC"/>
</dbReference>
<dbReference type="SUPFAM" id="SSF81333">
    <property type="entry name" value="F1F0 ATP synthase subunit C"/>
    <property type="match status" value="1"/>
</dbReference>
<dbReference type="PROSITE" id="PS00605">
    <property type="entry name" value="ATPASE_C"/>
    <property type="match status" value="1"/>
</dbReference>
<sequence length="72" mass="7087">MDMKLLAAGIAVLAGIGAGIGIGIATAGALEATARQPEASDKIQSLFIMGAGLSEATAIYGLVVSIILLFVA</sequence>
<name>ATPL_CLOPE</name>